<gene>
    <name evidence="4" type="primary">colD</name>
    <name type="synonym">colA</name>
</gene>
<feature type="chain" id="PRO_0000435690" description="GDP-4-keto-6-deoxy-D-mannose 3-dehydratase">
    <location>
        <begin position="1"/>
        <end position="393"/>
    </location>
</feature>
<feature type="transmembrane region" description="Helical" evidence="2">
    <location>
        <begin position="53"/>
        <end position="73"/>
    </location>
</feature>
<feature type="active site" description="Proton donor/acceptor" evidence="1">
    <location>
        <position position="192"/>
    </location>
</feature>
<feature type="binding site" evidence="1">
    <location>
        <begin position="30"/>
        <end position="33"/>
    </location>
    <ligand>
        <name>GDP-4-dehydro-alpha-D-rhamnose</name>
        <dbReference type="ChEBI" id="CHEBI:57964"/>
        <note>ligand shared between dimeric partners</note>
    </ligand>
</feature>
<feature type="binding site" description="in other chain" evidence="1">
    <location>
        <begin position="60"/>
        <end position="61"/>
    </location>
    <ligand>
        <name>pyridoxal 5'-phosphate</name>
        <dbReference type="ChEBI" id="CHEBI:597326"/>
        <note>ligand shared between dimeric partners</note>
    </ligand>
</feature>
<feature type="binding site" description="in other chain" evidence="1">
    <location>
        <position position="92"/>
    </location>
    <ligand>
        <name>pyridoxal 5'-phosphate</name>
        <dbReference type="ChEBI" id="CHEBI:597326"/>
        <note>ligand shared between dimeric partners</note>
    </ligand>
</feature>
<feature type="binding site" description="in other chain" evidence="1">
    <location>
        <position position="166"/>
    </location>
    <ligand>
        <name>pyridoxal 5'-phosphate</name>
        <dbReference type="ChEBI" id="CHEBI:597326"/>
        <note>ligand shared between dimeric partners</note>
    </ligand>
</feature>
<feature type="binding site" description="in other chain" evidence="1">
    <location>
        <position position="187"/>
    </location>
    <ligand>
        <name>pyridoxal 5'-phosphate</name>
        <dbReference type="ChEBI" id="CHEBI:597326"/>
        <note>ligand shared between dimeric partners</note>
    </ligand>
</feature>
<feature type="binding site" evidence="1">
    <location>
        <position position="219"/>
    </location>
    <ligand>
        <name>L-glutamate</name>
        <dbReference type="ChEBI" id="CHEBI:29985"/>
        <note>ligand shared between dimeric partners</note>
    </ligand>
</feature>
<feature type="binding site" evidence="1">
    <location>
        <position position="223"/>
    </location>
    <ligand>
        <name>GDP-4-dehydro-alpha-D-rhamnose</name>
        <dbReference type="ChEBI" id="CHEBI:57964"/>
        <note>ligand shared between dimeric partners</note>
    </ligand>
</feature>
<feature type="binding site" evidence="1">
    <location>
        <position position="252"/>
    </location>
    <ligand>
        <name>pyridoxal 5'-phosphate</name>
        <dbReference type="ChEBI" id="CHEBI:597326"/>
        <note>ligand shared between dimeric partners</note>
    </ligand>
</feature>
<feature type="binding site" evidence="1">
    <location>
        <position position="254"/>
    </location>
    <ligand>
        <name>L-glutamate</name>
        <dbReference type="ChEBI" id="CHEBI:29985"/>
        <note>ligand shared between dimeric partners</note>
    </ligand>
</feature>
<feature type="binding site" description="in other chain" evidence="1">
    <location>
        <position position="333"/>
    </location>
    <ligand>
        <name>GDP-4-dehydro-alpha-D-rhamnose</name>
        <dbReference type="ChEBI" id="CHEBI:57964"/>
        <note>ligand shared between dimeric partners</note>
    </ligand>
</feature>
<evidence type="ECO:0000250" key="1">
    <source>
        <dbReference type="UniProtKB" id="D3QY10"/>
    </source>
</evidence>
<evidence type="ECO:0000255" key="2"/>
<evidence type="ECO:0000269" key="3">
    <source>
    </source>
</evidence>
<evidence type="ECO:0000303" key="4">
    <source>
    </source>
</evidence>
<evidence type="ECO:0000305" key="5"/>
<evidence type="ECO:0000305" key="6">
    <source>
    </source>
</evidence>
<evidence type="ECO:0000312" key="7">
    <source>
        <dbReference type="EMBL" id="AEP25496.1"/>
    </source>
</evidence>
<protein>
    <recommendedName>
        <fullName evidence="4">GDP-4-keto-6-deoxy-D-mannose 3-dehydratase</fullName>
        <ecNumber evidence="3">4.2.1.168</ecNumber>
    </recommendedName>
</protein>
<sequence>MRKIMINFPLASSTWDEKELNAIQRIIDSNMFTMGESVKQYEKDFAEYFGSKYSVMVSSGSTANLLMIAALFFTKKPKFKRGDEVIVPAVSWSTTYFPLQQYGLNVRFVDIDKKTLNIDLDKLKSAITEKTKAILAVNLLGNPNDFDAITKITEGKDIFILEDNCESMGARLNGKQAGTYGLMGTFSSFFSHHIATMEGGCVITDDEELYHILLCIRAHGWTRNLPEFNHITGQKSIDPFEESFKFVLPGYNVRPLEMSGAIGIEQLKKLPSFIEMRRKNATIFKELFSSHPYIDIQQETGESSWFGFALILKESSPITRAELVKKLIEAGIECRPIVTGNFLKNKEVLKFFDYTIAGEVTDAEYIDKHGLFVGNHQIDLSEQIKNLFNILKK</sequence>
<name>COLD_YERPU</name>
<reference key="1">
    <citation type="journal article" date="2011" name="Glycobiology">
        <title>Genetic analysis of the O-antigen gene clusters of Yersinia pseudotuberculosis O:6 and O:7.</title>
        <authorList>
            <person name="Cunneen M.M."/>
            <person name="Pacinelli E."/>
            <person name="Song W.C."/>
            <person name="Reeves P.R."/>
        </authorList>
    </citation>
    <scope>NUCLEOTIDE SEQUENCE [GENOMIC DNA]</scope>
    <source>
        <strain>H720/86</strain>
    </source>
</reference>
<reference key="2">
    <citation type="journal article" date="2004" name="Biochemistry">
        <title>Biosynthesis of colitose: expression, purification, and mechanistic characterization of GDP-4-keto-6-deoxy-D-mannose-3-dehydrase (ColD) and GDP-L-colitose synthase (ColC).</title>
        <authorList>
            <person name="Alam J."/>
            <person name="Beyer N."/>
            <person name="Liu H.W."/>
        </authorList>
    </citation>
    <scope>FUNCTION</scope>
    <scope>CATALYTIC ACTIVITY</scope>
    <scope>COFACTOR</scope>
    <scope>BIOPHYSICOCHEMICAL PROPERTIES</scope>
    <scope>PATHWAY</scope>
    <scope>SUBUNIT</scope>
</reference>
<accession>G4WJD4</accession>
<keyword id="KW-1003">Cell membrane</keyword>
<keyword id="KW-0456">Lyase</keyword>
<keyword id="KW-0472">Membrane</keyword>
<keyword id="KW-0663">Pyridoxal phosphate</keyword>
<keyword id="KW-0812">Transmembrane</keyword>
<keyword id="KW-1133">Transmembrane helix</keyword>
<dbReference type="EC" id="4.2.1.168" evidence="3"/>
<dbReference type="EMBL" id="HQ456392">
    <property type="protein sequence ID" value="AEP25496.1"/>
    <property type="molecule type" value="Genomic_DNA"/>
</dbReference>
<dbReference type="SMR" id="G4WJD4"/>
<dbReference type="KEGG" id="ag:AEP25496"/>
<dbReference type="BRENDA" id="4.2.1.168">
    <property type="organism ID" value="4560"/>
</dbReference>
<dbReference type="UniPathway" id="UPA01070"/>
<dbReference type="GO" id="GO:0005886">
    <property type="term" value="C:plasma membrane"/>
    <property type="evidence" value="ECO:0007669"/>
    <property type="project" value="UniProtKB-SubCell"/>
</dbReference>
<dbReference type="GO" id="GO:0016595">
    <property type="term" value="F:glutamate binding"/>
    <property type="evidence" value="ECO:0000314"/>
    <property type="project" value="UniProtKB"/>
</dbReference>
<dbReference type="GO" id="GO:0016836">
    <property type="term" value="F:hydro-lyase activity"/>
    <property type="evidence" value="ECO:0000314"/>
    <property type="project" value="UniProtKB"/>
</dbReference>
<dbReference type="GO" id="GO:0042803">
    <property type="term" value="F:protein homodimerization activity"/>
    <property type="evidence" value="ECO:0000314"/>
    <property type="project" value="UniProtKB"/>
</dbReference>
<dbReference type="GO" id="GO:0030170">
    <property type="term" value="F:pyridoxal phosphate binding"/>
    <property type="evidence" value="ECO:0000314"/>
    <property type="project" value="UniProtKB"/>
</dbReference>
<dbReference type="GO" id="GO:0008483">
    <property type="term" value="F:transaminase activity"/>
    <property type="evidence" value="ECO:0007669"/>
    <property type="project" value="TreeGrafter"/>
</dbReference>
<dbReference type="GO" id="GO:0009225">
    <property type="term" value="P:nucleotide-sugar metabolic process"/>
    <property type="evidence" value="ECO:0000314"/>
    <property type="project" value="UniProtKB"/>
</dbReference>
<dbReference type="GO" id="GO:0000271">
    <property type="term" value="P:polysaccharide biosynthetic process"/>
    <property type="evidence" value="ECO:0007669"/>
    <property type="project" value="TreeGrafter"/>
</dbReference>
<dbReference type="CDD" id="cd00616">
    <property type="entry name" value="AHBA_syn"/>
    <property type="match status" value="1"/>
</dbReference>
<dbReference type="Gene3D" id="3.90.1150.10">
    <property type="entry name" value="Aspartate Aminotransferase, domain 1"/>
    <property type="match status" value="1"/>
</dbReference>
<dbReference type="Gene3D" id="3.40.640.10">
    <property type="entry name" value="Type I PLP-dependent aspartate aminotransferase-like (Major domain)"/>
    <property type="match status" value="1"/>
</dbReference>
<dbReference type="InterPro" id="IPR000653">
    <property type="entry name" value="DegT/StrS_aminotransferase"/>
</dbReference>
<dbReference type="InterPro" id="IPR015424">
    <property type="entry name" value="PyrdxlP-dep_Trfase"/>
</dbReference>
<dbReference type="InterPro" id="IPR015421">
    <property type="entry name" value="PyrdxlP-dep_Trfase_major"/>
</dbReference>
<dbReference type="InterPro" id="IPR015422">
    <property type="entry name" value="PyrdxlP-dep_Trfase_small"/>
</dbReference>
<dbReference type="PANTHER" id="PTHR30244:SF34">
    <property type="entry name" value="DTDP-4-AMINO-4,6-DIDEOXYGALACTOSE TRANSAMINASE"/>
    <property type="match status" value="1"/>
</dbReference>
<dbReference type="PANTHER" id="PTHR30244">
    <property type="entry name" value="TRANSAMINASE"/>
    <property type="match status" value="1"/>
</dbReference>
<dbReference type="Pfam" id="PF01041">
    <property type="entry name" value="DegT_DnrJ_EryC1"/>
    <property type="match status" value="1"/>
</dbReference>
<dbReference type="PIRSF" id="PIRSF000390">
    <property type="entry name" value="PLP_StrS"/>
    <property type="match status" value="1"/>
</dbReference>
<dbReference type="SUPFAM" id="SSF53383">
    <property type="entry name" value="PLP-dependent transferases"/>
    <property type="match status" value="1"/>
</dbReference>
<comment type="function">
    <text evidence="3">Involved in the biosynthesis of L-colitose, a 3,6-dideoxyhexose present in the O-antigen region of lipopolysaccharides (LPS), where it serves as an antigenic determinant and is vital for bacterial defense and survival. Catalyzes the removal of the C3'-hydroxyl group from GDP-4-keto-6-deoxy-D-mannose via a combined transamination-deoxygenation reaction. The catalysis is initiated by a transamination step in which pyridoxal 5'-phosphate (PLP) is converted to pyridoxamine 5'-phosphate (PMP) in the presence of L-glutamate. This coenzyme then forms a Schiff base with GDP-4-keto-6-deoxy-D-mannose and the resulting adduct undergoes a PMP-mediated beta-dehydration reaction to give a sugar enamine intermediate, which after tautomerization and hydrolysis to release ammonia yields GDP-4-keto-3,6-dideoxy-D-mannose as a product.</text>
</comment>
<comment type="catalytic activity">
    <reaction evidence="3">
        <text>GDP-4-dehydro-alpha-D-rhamnose + L-glutamate = GDP-4-dehydro-3,6-dideoxy-alpha-D-mannose + 2-oxoglutarate + NH4(+)</text>
        <dbReference type="Rhea" id="RHEA:49488"/>
        <dbReference type="ChEBI" id="CHEBI:16810"/>
        <dbReference type="ChEBI" id="CHEBI:28938"/>
        <dbReference type="ChEBI" id="CHEBI:29985"/>
        <dbReference type="ChEBI" id="CHEBI:57964"/>
        <dbReference type="ChEBI" id="CHEBI:73931"/>
        <dbReference type="EC" id="4.2.1.168"/>
    </reaction>
</comment>
<comment type="cofactor">
    <cofactor evidence="3">
        <name>pyridoxal 5'-phosphate</name>
        <dbReference type="ChEBI" id="CHEBI:597326"/>
    </cofactor>
</comment>
<comment type="biophysicochemical properties">
    <kinetics>
        <KM evidence="3">8.5 uM for GDP-4-keto-6-deoxy-D-mannose (at pH 7 and 37 degrees Celsius)</KM>
        <KM evidence="3">1.4 mM for L-glutamate (at pH 7 and 37 degrees Celsius)</KM>
        <text evidence="3">kcat is 0.6 sec(-1) (at pH 7 and 37 degrees Celsius).</text>
    </kinetics>
</comment>
<comment type="pathway">
    <text evidence="6">Nucleotide-sugar metabolism; GDP-L-colitose biosynthesis.</text>
</comment>
<comment type="subunit">
    <text evidence="3">Homodimer.</text>
</comment>
<comment type="subcellular location">
    <subcellularLocation>
        <location evidence="2">Cell membrane</location>
        <topology evidence="2">Single-pass membrane protein</topology>
    </subcellularLocation>
</comment>
<comment type="similarity">
    <text evidence="5">Belongs to the DegT/DnrJ/EryC1 family.</text>
</comment>
<organism evidence="7">
    <name type="scientific">Yersinia pseudotuberculosis</name>
    <dbReference type="NCBI Taxonomy" id="633"/>
    <lineage>
        <taxon>Bacteria</taxon>
        <taxon>Pseudomonadati</taxon>
        <taxon>Pseudomonadota</taxon>
        <taxon>Gammaproteobacteria</taxon>
        <taxon>Enterobacterales</taxon>
        <taxon>Yersiniaceae</taxon>
        <taxon>Yersinia</taxon>
    </lineage>
</organism>
<proteinExistence type="evidence at protein level"/>